<dbReference type="EC" id="3.1.3.16"/>
<dbReference type="EC" id="3.1.3.48"/>
<dbReference type="EMBL" id="M55918">
    <property type="protein sequence ID" value="AAA91822.1"/>
    <property type="molecule type" value="Genomic_DNA"/>
</dbReference>
<dbReference type="EMBL" id="M81223">
    <property type="protein sequence ID" value="AAA42882.1"/>
    <property type="molecule type" value="Genomic_DNA"/>
</dbReference>
<dbReference type="PIR" id="A39926">
    <property type="entry name" value="A39926"/>
</dbReference>
<dbReference type="PIR" id="A48343">
    <property type="entry name" value="A48343"/>
</dbReference>
<dbReference type="Proteomes" id="UP000007528">
    <property type="component" value="Segment"/>
</dbReference>
<dbReference type="GO" id="GO:0004722">
    <property type="term" value="F:protein serine/threonine phosphatase activity"/>
    <property type="evidence" value="ECO:0007669"/>
    <property type="project" value="UniProtKB-EC"/>
</dbReference>
<dbReference type="GO" id="GO:0004725">
    <property type="term" value="F:protein tyrosine phosphatase activity"/>
    <property type="evidence" value="ECO:0007669"/>
    <property type="project" value="UniProtKB-EC"/>
</dbReference>
<dbReference type="InterPro" id="IPR004118">
    <property type="entry name" value="HEV_TT_vir_Orf2/Gyrovir_Vp2_N"/>
</dbReference>
<dbReference type="Pfam" id="PF02957">
    <property type="entry name" value="TT_ORF2-like"/>
    <property type="match status" value="1"/>
</dbReference>
<organismHost>
    <name type="scientific">Gallus gallus</name>
    <name type="common">Chicken</name>
    <dbReference type="NCBI Taxonomy" id="9031"/>
</organismHost>
<feature type="chain" id="PRO_0000223004" description="Dual specificity protein phosphatase VP2">
    <location>
        <begin position="1"/>
        <end position="216"/>
    </location>
</feature>
<feature type="region of interest" description="Disordered" evidence="2">
    <location>
        <begin position="1"/>
        <end position="50"/>
    </location>
</feature>
<feature type="region of interest" description="Disordered" evidence="2">
    <location>
        <begin position="165"/>
        <end position="187"/>
    </location>
</feature>
<feature type="compositionally biased region" description="Low complexity" evidence="2">
    <location>
        <begin position="21"/>
        <end position="32"/>
    </location>
</feature>
<feature type="compositionally biased region" description="Acidic residues" evidence="2">
    <location>
        <begin position="172"/>
        <end position="187"/>
    </location>
</feature>
<feature type="active site" description="Phosphocysteine intermediate" evidence="1">
    <location>
        <position position="95"/>
    </location>
</feature>
<feature type="sequence conflict" description="In Ref. 1; AAA91822." evidence="5" ref="1">
    <original>V</original>
    <variation>A</variation>
    <location>
        <position position="153"/>
    </location>
</feature>
<feature type="sequence conflict" description="In Ref. 2; AAA42882." evidence="5" ref="2">
    <original>D</original>
    <variation>N</variation>
    <location>
        <position position="187"/>
    </location>
</feature>
<evidence type="ECO:0000250" key="1"/>
<evidence type="ECO:0000256" key="2">
    <source>
        <dbReference type="SAM" id="MobiDB-lite"/>
    </source>
</evidence>
<evidence type="ECO:0000269" key="3">
    <source>
    </source>
</evidence>
<evidence type="ECO:0000269" key="4">
    <source>
    </source>
</evidence>
<evidence type="ECO:0000305" key="5"/>
<organism>
    <name type="scientific">Chicken anemia virus (isolate Germany Cuxhaven-1)</name>
    <name type="common">CAV</name>
    <dbReference type="NCBI Taxonomy" id="73475"/>
    <lineage>
        <taxon>Viruses</taxon>
        <taxon>Viruses incertae sedis</taxon>
        <taxon>Anelloviridae</taxon>
        <taxon>Gyrovirus</taxon>
        <taxon>Gyrovirus chickenanemia</taxon>
    </lineage>
</organism>
<protein>
    <recommendedName>
        <fullName>Dual specificity protein phosphatase VP2</fullName>
        <ecNumber>3.1.3.16</ecNumber>
        <ecNumber>3.1.3.48</ecNumber>
    </recommendedName>
</protein>
<reference key="1">
    <citation type="journal article" date="1991" name="J. Virol.">
        <title>Characterization of cloned chicken anemia virus DNA that contains all elements for the infectious replication cycle.</title>
        <authorList>
            <person name="Noteborn M.H.M."/>
            <person name="de Boer G.F."/>
            <person name="van Roozelaar D.J."/>
            <person name="Karreman C."/>
            <person name="Kranenburg O."/>
            <person name="Vos J.G."/>
            <person name="Jeurissen S.H.M."/>
            <person name="Hoeben R.C."/>
            <person name="Zantema A."/>
            <person name="Koch G."/>
            <person name="van Ormondt H."/>
            <person name="van der Eb A.J."/>
        </authorList>
    </citation>
    <scope>NUCLEOTIDE SEQUENCE [GENOMIC DNA]</scope>
</reference>
<reference key="2">
    <citation type="journal article" date="1992" name="Arch. Virol.">
        <title>Characterization of viral DNAs from cells infected with chicken anaemia agent: sequence analysis of the cloned replicative form and transfection capabilities of cloned genome fragments.</title>
        <authorList>
            <person name="Meehan B.M."/>
            <person name="Todd D."/>
            <person name="Creelan J.L."/>
            <person name="Earle J.A.P."/>
            <person name="Hoey E.M."/>
            <person name="McNulty M.S."/>
        </authorList>
    </citation>
    <scope>NUCLEOTIDE SEQUENCE [GENOMIC DNA]</scope>
</reference>
<reference key="3">
    <citation type="journal article" date="1995" name="J. Gen. Virol.">
        <title>Identification of a 24 kDa protein expressed by chicken anaemia virus.</title>
        <authorList>
            <person name="Douglas A.J."/>
            <person name="Phenix K."/>
            <person name="Mawhinney K.A."/>
            <person name="Todd D."/>
            <person name="Mackie D.P."/>
            <person name="Curran W.L."/>
        </authorList>
    </citation>
    <scope>INDUCTION</scope>
</reference>
<reference key="4">
    <citation type="journal article" date="1998" name="J. Gen. Virol.">
        <title>Simultaneous expression of recombinant baculovirus-encoded chicken anaemia virus (CAV) proteins VP1 and VP2 is required for formation of the CAV-specific neutralizing epitope.</title>
        <authorList>
            <person name="Noteborn M.H."/>
            <person name="Verschueren C.A."/>
            <person name="Koch G."/>
            <person name="Van der Eb A.J."/>
        </authorList>
    </citation>
    <scope>FUNCTION</scope>
</reference>
<proteinExistence type="evidence at transcript level"/>
<gene>
    <name type="primary">VP2</name>
</gene>
<keyword id="KW-0244">Early protein</keyword>
<keyword id="KW-0378">Hydrolase</keyword>
<keyword id="KW-0904">Protein phosphatase</keyword>
<keyword id="KW-1185">Reference proteome</keyword>
<sequence>MHGNGGQPAAGGSESALSREGQPGPSGAAQGQVISNERSPRRYSTRTINGVQATNKFTAVGNPSLQRDPDWYRWNYNHSIAVWLRECSRSHAKICNCGQFRKHWFQECAGLEDRSTQASLEEAILRPLRVQGKRAKRKLDYHYSQPTPNRKKVYKTVRWQDELADREADFTPSEEDGGTTSSDFDEDINFDIGGDSGIVDELLGRPFTTPAPVRIV</sequence>
<comment type="function">
    <text evidence="4">May act as a scaffold protein in virion assembly. May also play a role in intracellular signaling during viral replication.</text>
</comment>
<comment type="catalytic activity">
    <reaction>
        <text>O-phospho-L-tyrosyl-[protein] + H2O = L-tyrosyl-[protein] + phosphate</text>
        <dbReference type="Rhea" id="RHEA:10684"/>
        <dbReference type="Rhea" id="RHEA-COMP:10136"/>
        <dbReference type="Rhea" id="RHEA-COMP:20101"/>
        <dbReference type="ChEBI" id="CHEBI:15377"/>
        <dbReference type="ChEBI" id="CHEBI:43474"/>
        <dbReference type="ChEBI" id="CHEBI:46858"/>
        <dbReference type="ChEBI" id="CHEBI:61978"/>
        <dbReference type="EC" id="3.1.3.48"/>
    </reaction>
</comment>
<comment type="catalytic activity">
    <reaction>
        <text>O-phospho-L-seryl-[protein] + H2O = L-seryl-[protein] + phosphate</text>
        <dbReference type="Rhea" id="RHEA:20629"/>
        <dbReference type="Rhea" id="RHEA-COMP:9863"/>
        <dbReference type="Rhea" id="RHEA-COMP:11604"/>
        <dbReference type="ChEBI" id="CHEBI:15377"/>
        <dbReference type="ChEBI" id="CHEBI:29999"/>
        <dbReference type="ChEBI" id="CHEBI:43474"/>
        <dbReference type="ChEBI" id="CHEBI:83421"/>
        <dbReference type="EC" id="3.1.3.16"/>
    </reaction>
</comment>
<comment type="catalytic activity">
    <reaction>
        <text>O-phospho-L-threonyl-[protein] + H2O = L-threonyl-[protein] + phosphate</text>
        <dbReference type="Rhea" id="RHEA:47004"/>
        <dbReference type="Rhea" id="RHEA-COMP:11060"/>
        <dbReference type="Rhea" id="RHEA-COMP:11605"/>
        <dbReference type="ChEBI" id="CHEBI:15377"/>
        <dbReference type="ChEBI" id="CHEBI:30013"/>
        <dbReference type="ChEBI" id="CHEBI:43474"/>
        <dbReference type="ChEBI" id="CHEBI:61977"/>
        <dbReference type="EC" id="3.1.3.16"/>
    </reaction>
</comment>
<comment type="induction">
    <text evidence="3">VP1 and VP2 are detected 12 hours post infection, while VP3 only after 24 hours.</text>
</comment>
<comment type="similarity">
    <text evidence="5">Belongs to the gyrovirus protein VP2 family.</text>
</comment>
<name>VP2_CAVC1</name>
<accession>P69484</accession>
<accession>P54091</accession>
<accession>Q99151</accession>